<protein>
    <recommendedName>
        <fullName evidence="1">Mycothiol acetyltransferase</fullName>
        <shortName evidence="1">MSH acetyltransferase</shortName>
        <ecNumber evidence="1">2.3.1.189</ecNumber>
    </recommendedName>
    <alternativeName>
        <fullName evidence="1">Mycothiol synthase</fullName>
    </alternativeName>
</protein>
<feature type="chain" id="PRO_0000400249" description="Mycothiol acetyltransferase">
    <location>
        <begin position="1"/>
        <end position="296"/>
    </location>
</feature>
<feature type="domain" description="N-acetyltransferase 1" evidence="1">
    <location>
        <begin position="17"/>
        <end position="146"/>
    </location>
</feature>
<feature type="domain" description="N-acetyltransferase 2" evidence="1">
    <location>
        <begin position="156"/>
        <end position="296"/>
    </location>
</feature>
<feature type="binding site" evidence="1">
    <location>
        <position position="44"/>
    </location>
    <ligand>
        <name>1D-myo-inositol 2-(L-cysteinylamino)-2-deoxy-alpha-D-glucopyranoside</name>
        <dbReference type="ChEBI" id="CHEBI:58887"/>
    </ligand>
</feature>
<feature type="binding site" evidence="1">
    <location>
        <begin position="81"/>
        <end position="83"/>
    </location>
    <ligand>
        <name>acetyl-CoA</name>
        <dbReference type="ChEBI" id="CHEBI:57288"/>
        <label>1</label>
    </ligand>
</feature>
<feature type="binding site" evidence="1">
    <location>
        <position position="183"/>
    </location>
    <ligand>
        <name>1D-myo-inositol 2-(L-cysteinylamino)-2-deoxy-alpha-D-glucopyranoside</name>
        <dbReference type="ChEBI" id="CHEBI:58887"/>
    </ligand>
</feature>
<feature type="binding site" evidence="1">
    <location>
        <position position="222"/>
    </location>
    <ligand>
        <name>1D-myo-inositol 2-(L-cysteinylamino)-2-deoxy-alpha-D-glucopyranoside</name>
        <dbReference type="ChEBI" id="CHEBI:58887"/>
    </ligand>
</feature>
<feature type="binding site" evidence="1">
    <location>
        <position position="230"/>
    </location>
    <ligand>
        <name>1D-myo-inositol 2-(L-cysteinylamino)-2-deoxy-alpha-D-glucopyranoside</name>
        <dbReference type="ChEBI" id="CHEBI:58887"/>
    </ligand>
</feature>
<feature type="binding site" evidence="1">
    <location>
        <begin position="234"/>
        <end position="236"/>
    </location>
    <ligand>
        <name>acetyl-CoA</name>
        <dbReference type="ChEBI" id="CHEBI:57288"/>
        <label>2</label>
    </ligand>
</feature>
<feature type="binding site" evidence="1">
    <location>
        <begin position="241"/>
        <end position="247"/>
    </location>
    <ligand>
        <name>acetyl-CoA</name>
        <dbReference type="ChEBI" id="CHEBI:57288"/>
        <label>2</label>
    </ligand>
</feature>
<feature type="binding site" evidence="1">
    <location>
        <position position="268"/>
    </location>
    <ligand>
        <name>1D-myo-inositol 2-(L-cysteinylamino)-2-deoxy-alpha-D-glucopyranoside</name>
        <dbReference type="ChEBI" id="CHEBI:58887"/>
    </ligand>
</feature>
<evidence type="ECO:0000255" key="1">
    <source>
        <dbReference type="HAMAP-Rule" id="MF_01698"/>
    </source>
</evidence>
<organism>
    <name type="scientific">Corynebacterium efficiens (strain DSM 44549 / YS-314 / AJ 12310 / JCM 11189 / NBRC 100395)</name>
    <dbReference type="NCBI Taxonomy" id="196164"/>
    <lineage>
        <taxon>Bacteria</taxon>
        <taxon>Bacillati</taxon>
        <taxon>Actinomycetota</taxon>
        <taxon>Actinomycetes</taxon>
        <taxon>Mycobacteriales</taxon>
        <taxon>Corynebacteriaceae</taxon>
        <taxon>Corynebacterium</taxon>
    </lineage>
</organism>
<accession>Q8FMN5</accession>
<gene>
    <name evidence="1" type="primary">mshD</name>
    <name type="ordered locus">CE2468</name>
</gene>
<sequence>MATLGPMNTKVTTTHLYNHRDLREQAMIMLKEVRAIDGVEALSEQFVRGLAEPGLGHTHYTVSVDGRIIGLGATDGETSELAVHPAHRRQGIGRELIDALPTDGVWAHGDLPPAQALASSLGLNKTRELLVMAVEGDALREAAVYDNPAGITNSSLKTAPGTRDEVEGKWLKANNEAFHWHPEQGGWDRNRLTRAQSATWFRETDVLFLWDGDELVGFHWVKKHSDELQEIYVVGLAEAYRGKGLGDPLVRLGLRHMVNGGARRVILYVEADNDSAVAAYEKLGFTVAERHVVYEK</sequence>
<proteinExistence type="inferred from homology"/>
<comment type="function">
    <text evidence="1">Catalyzes the transfer of acetyl from acetyl-CoA to desacetylmycothiol (Cys-GlcN-Ins) to form mycothiol.</text>
</comment>
<comment type="catalytic activity">
    <reaction evidence="1">
        <text>1D-myo-inositol 2-(L-cysteinylamino)-2-deoxy-alpha-D-glucopyranoside + acetyl-CoA = mycothiol + CoA + H(+)</text>
        <dbReference type="Rhea" id="RHEA:26172"/>
        <dbReference type="ChEBI" id="CHEBI:15378"/>
        <dbReference type="ChEBI" id="CHEBI:16768"/>
        <dbReference type="ChEBI" id="CHEBI:57287"/>
        <dbReference type="ChEBI" id="CHEBI:57288"/>
        <dbReference type="ChEBI" id="CHEBI:58887"/>
        <dbReference type="EC" id="2.3.1.189"/>
    </reaction>
</comment>
<comment type="subunit">
    <text evidence="1">Monomer.</text>
</comment>
<comment type="similarity">
    <text evidence="1">Belongs to the acetyltransferase family. MshD subfamily.</text>
</comment>
<name>MSHD_COREF</name>
<reference key="1">
    <citation type="journal article" date="2003" name="Genome Res.">
        <title>Comparative complete genome sequence analysis of the amino acid replacements responsible for the thermostability of Corynebacterium efficiens.</title>
        <authorList>
            <person name="Nishio Y."/>
            <person name="Nakamura Y."/>
            <person name="Kawarabayasi Y."/>
            <person name="Usuda Y."/>
            <person name="Kimura E."/>
            <person name="Sugimoto S."/>
            <person name="Matsui K."/>
            <person name="Yamagishi A."/>
            <person name="Kikuchi H."/>
            <person name="Ikeo K."/>
            <person name="Gojobori T."/>
        </authorList>
    </citation>
    <scope>NUCLEOTIDE SEQUENCE [LARGE SCALE GENOMIC DNA]</scope>
    <source>
        <strain>DSM 44549 / YS-314 / AJ 12310 / JCM 11189 / NBRC 100395</strain>
    </source>
</reference>
<keyword id="KW-0012">Acyltransferase</keyword>
<keyword id="KW-1185">Reference proteome</keyword>
<keyword id="KW-0677">Repeat</keyword>
<keyword id="KW-0808">Transferase</keyword>
<dbReference type="EC" id="2.3.1.189" evidence="1"/>
<dbReference type="EMBL" id="BA000035">
    <property type="protein sequence ID" value="BAC19278.1"/>
    <property type="molecule type" value="Genomic_DNA"/>
</dbReference>
<dbReference type="RefSeq" id="WP_006769174.1">
    <property type="nucleotide sequence ID" value="NC_004369.1"/>
</dbReference>
<dbReference type="SMR" id="Q8FMN5"/>
<dbReference type="STRING" id="196164.gene:10742914"/>
<dbReference type="KEGG" id="cef:CE2468"/>
<dbReference type="eggNOG" id="COG0456">
    <property type="taxonomic scope" value="Bacteria"/>
</dbReference>
<dbReference type="HOGENOM" id="CLU_068014_0_0_11"/>
<dbReference type="OrthoDB" id="3208058at2"/>
<dbReference type="Proteomes" id="UP000001409">
    <property type="component" value="Chromosome"/>
</dbReference>
<dbReference type="GO" id="GO:0035447">
    <property type="term" value="F:mycothiol synthase activity"/>
    <property type="evidence" value="ECO:0007669"/>
    <property type="project" value="UniProtKB-UniRule"/>
</dbReference>
<dbReference type="GO" id="GO:0008999">
    <property type="term" value="F:protein-N-terminal-alanine acetyltransferase activity"/>
    <property type="evidence" value="ECO:0007669"/>
    <property type="project" value="TreeGrafter"/>
</dbReference>
<dbReference type="GO" id="GO:0010125">
    <property type="term" value="P:mycothiol biosynthetic process"/>
    <property type="evidence" value="ECO:0007669"/>
    <property type="project" value="UniProtKB-UniRule"/>
</dbReference>
<dbReference type="CDD" id="cd04301">
    <property type="entry name" value="NAT_SF"/>
    <property type="match status" value="2"/>
</dbReference>
<dbReference type="Gene3D" id="3.40.630.30">
    <property type="match status" value="1"/>
</dbReference>
<dbReference type="HAMAP" id="MF_01698">
    <property type="entry name" value="MshD"/>
    <property type="match status" value="1"/>
</dbReference>
<dbReference type="InterPro" id="IPR016181">
    <property type="entry name" value="Acyl_CoA_acyltransferase"/>
</dbReference>
<dbReference type="InterPro" id="IPR000182">
    <property type="entry name" value="GNAT_dom"/>
</dbReference>
<dbReference type="InterPro" id="IPR050276">
    <property type="entry name" value="MshD_Acetyltransferase"/>
</dbReference>
<dbReference type="InterPro" id="IPR017813">
    <property type="entry name" value="Mycothiol_AcTrfase"/>
</dbReference>
<dbReference type="NCBIfam" id="TIGR03448">
    <property type="entry name" value="mycothiol_MshD"/>
    <property type="match status" value="1"/>
</dbReference>
<dbReference type="PANTHER" id="PTHR43617">
    <property type="entry name" value="L-AMINO ACID N-ACETYLTRANSFERASE"/>
    <property type="match status" value="1"/>
</dbReference>
<dbReference type="PANTHER" id="PTHR43617:SF31">
    <property type="entry name" value="MYCOTHIOL ACETYLTRANSFERASE"/>
    <property type="match status" value="1"/>
</dbReference>
<dbReference type="Pfam" id="PF00583">
    <property type="entry name" value="Acetyltransf_1"/>
    <property type="match status" value="1"/>
</dbReference>
<dbReference type="Pfam" id="PF13508">
    <property type="entry name" value="Acetyltransf_7"/>
    <property type="match status" value="1"/>
</dbReference>
<dbReference type="PIRSF" id="PIRSF021524">
    <property type="entry name" value="MSH_acetyltransferase"/>
    <property type="match status" value="1"/>
</dbReference>
<dbReference type="SUPFAM" id="SSF55729">
    <property type="entry name" value="Acyl-CoA N-acyltransferases (Nat)"/>
    <property type="match status" value="2"/>
</dbReference>
<dbReference type="PROSITE" id="PS51186">
    <property type="entry name" value="GNAT"/>
    <property type="match status" value="2"/>
</dbReference>